<feature type="peptide" id="PRO_0000393349" description="M-poneritoxin-Da4b" evidence="1">
    <location>
        <begin position="1"/>
        <end position="28"/>
    </location>
</feature>
<feature type="modified residue" description="Alanine amide" evidence="1">
    <location>
        <position position="28"/>
    </location>
</feature>
<protein>
    <recommendedName>
        <fullName evidence="4">M-poneritoxin-Da4b</fullName>
        <shortName evidence="4">M-PONTX-Da4b</shortName>
    </recommendedName>
    <alternativeName>
        <fullName evidence="3">Dinoponeratoxin Da-3177</fullName>
    </alternativeName>
    <alternativeName>
        <fullName evidence="5">Poneratoxin</fullName>
    </alternativeName>
</protein>
<reference key="1">
    <citation type="journal article" date="2010" name="Toxicon">
        <title>A biochemical characterization of the major peptides from the venom of the giant Neotropical hunting ant Dinoponera australis.</title>
        <authorList>
            <person name="Johnson S.R."/>
            <person name="Copello J.A."/>
            <person name="Evans M.S."/>
            <person name="Suarez A.V."/>
        </authorList>
    </citation>
    <scope>PROTEIN SEQUENCE</scope>
    <scope>MASS SPECTROMETRY</scope>
    <scope>SYNTHESIS</scope>
    <scope>AMIDATION AT ALA-28</scope>
    <scope>SUBCELLULAR LOCATION</scope>
    <source>
        <tissue>Venom</tissue>
    </source>
</reference>
<reference key="2">
    <citation type="journal article" date="2013" name="J. Proteomics">
        <title>Peptidomic comparison and characterization of the major components of the venom of the giant ant Dinoponera quadriceps collected in four different areas of Brazil.</title>
        <authorList>
            <person name="Cologna C.T."/>
            <person name="Cardoso Jdos S."/>
            <person name="Jourdan E."/>
            <person name="Degueldre M."/>
            <person name="Upert G."/>
            <person name="Gilles N."/>
            <person name="Uetanabaro A.P."/>
            <person name="Costa Neto E.M."/>
            <person name="Thonart P."/>
            <person name="de Pauw E."/>
            <person name="Quinton L."/>
        </authorList>
    </citation>
    <scope>FUNCTION</scope>
    <scope>SYNTHESIS</scope>
</reference>
<reference key="3">
    <citation type="journal article" date="2016" name="Toxins">
        <title>The biochemical toxin arsenal from ant venoms.</title>
        <authorList>
            <person name="Touchard A."/>
            <person name="Aili S.R."/>
            <person name="Fox E.G."/>
            <person name="Escoubas P."/>
            <person name="Orivel J."/>
            <person name="Nicholson G.M."/>
            <person name="Dejean A."/>
        </authorList>
    </citation>
    <scope>REVIEW</scope>
    <scope>NOMENCLATURE</scope>
</reference>
<organism>
    <name type="scientific">Dinoponera australis</name>
    <name type="common">Giant neotropical hunting ant</name>
    <dbReference type="NCBI Taxonomy" id="609289"/>
    <lineage>
        <taxon>Eukaryota</taxon>
        <taxon>Metazoa</taxon>
        <taxon>Ecdysozoa</taxon>
        <taxon>Arthropoda</taxon>
        <taxon>Hexapoda</taxon>
        <taxon>Insecta</taxon>
        <taxon>Pterygota</taxon>
        <taxon>Neoptera</taxon>
        <taxon>Endopterygota</taxon>
        <taxon>Hymenoptera</taxon>
        <taxon>Apocrita</taxon>
        <taxon>Aculeata</taxon>
        <taxon>Formicoidea</taxon>
        <taxon>Formicidae</taxon>
        <taxon>Ponerinae</taxon>
        <taxon>Ponerini</taxon>
        <taxon>Dinoponera</taxon>
    </lineage>
</organism>
<evidence type="ECO:0000269" key="1">
    <source>
    </source>
</evidence>
<evidence type="ECO:0000269" key="2">
    <source>
    </source>
</evidence>
<evidence type="ECO:0000303" key="3">
    <source>
    </source>
</evidence>
<evidence type="ECO:0000303" key="4">
    <source>
    </source>
</evidence>
<evidence type="ECO:0000305" key="5"/>
<evidence type="ECO:0000305" key="6">
    <source>
    </source>
</evidence>
<accession>P0CF05</accession>
<name>TX4B_DINAS</name>
<proteinExistence type="evidence at protein level"/>
<keyword id="KW-0027">Amidation</keyword>
<keyword id="KW-0044">Antibiotic</keyword>
<keyword id="KW-0929">Antimicrobial</keyword>
<keyword id="KW-0903">Direct protein sequencing</keyword>
<keyword id="KW-0295">Fungicide</keyword>
<keyword id="KW-0964">Secreted</keyword>
<sequence length="28" mass="3180">GLKDWWNKHKDKIIDVVKEMGKAGLQAA</sequence>
<dbReference type="GO" id="GO:0005576">
    <property type="term" value="C:extracellular region"/>
    <property type="evidence" value="ECO:0007669"/>
    <property type="project" value="UniProtKB-SubCell"/>
</dbReference>
<dbReference type="GO" id="GO:0042742">
    <property type="term" value="P:defense response to bacterium"/>
    <property type="evidence" value="ECO:0007669"/>
    <property type="project" value="UniProtKB-KW"/>
</dbReference>
<dbReference type="GO" id="GO:0050832">
    <property type="term" value="P:defense response to fungus"/>
    <property type="evidence" value="ECO:0007669"/>
    <property type="project" value="UniProtKB-KW"/>
</dbReference>
<dbReference type="GO" id="GO:0031640">
    <property type="term" value="P:killing of cells of another organism"/>
    <property type="evidence" value="ECO:0007669"/>
    <property type="project" value="UniProtKB-KW"/>
</dbReference>
<comment type="function">
    <text evidence="2">The synthetic peptide has antimicrobial activity against the Gram-positive bacteria B.amyloliquefacies S499 (MIC=0.05 mM), L.monocytogenes 2231 and S.aureus ATCC 29213, against the Gram-negative bacteria P.putida BTP1, P.aeruginosa PaO1 and E.coli ATCC 10536, and against the fungi S.cerevisiae, R.mucilaginosa and C.cucumerinum. It is not active against the fungi F.oxysporum and B.cinerea.</text>
</comment>
<comment type="subcellular location">
    <subcellularLocation>
        <location evidence="1">Secreted</location>
    </subcellularLocation>
</comment>
<comment type="tissue specificity">
    <text evidence="6">Expressed by the venom gland.</text>
</comment>
<comment type="mass spectrometry" mass="3176.7" method="Electrospray" evidence="1"/>